<proteinExistence type="evidence at protein level"/>
<gene>
    <name type="primary">Rcn2</name>
</gene>
<comment type="function">
    <text evidence="1">Not known. Binds calcium (By similarity).</text>
</comment>
<comment type="interaction">
    <interactant intactId="EBI-642694">
        <id>Q8BP92</id>
    </interactant>
    <interactant intactId="EBI-15828080">
        <id>Q7TNL3-1</id>
        <label>Stk40</label>
    </interactant>
    <organismsDiffer>false</organismsDiffer>
    <experiments>3</experiments>
</comment>
<comment type="subcellular location">
    <subcellularLocation>
        <location evidence="4">Endoplasmic reticulum lumen</location>
    </subcellularLocation>
</comment>
<comment type="similarity">
    <text evidence="5">Belongs to the CREC family.</text>
</comment>
<evidence type="ECO:0000250" key="1"/>
<evidence type="ECO:0000250" key="2">
    <source>
        <dbReference type="UniProtKB" id="Q14257"/>
    </source>
</evidence>
<evidence type="ECO:0000255" key="3">
    <source>
        <dbReference type="PROSITE-ProRule" id="PRU00448"/>
    </source>
</evidence>
<evidence type="ECO:0000255" key="4">
    <source>
        <dbReference type="PROSITE-ProRule" id="PRU10138"/>
    </source>
</evidence>
<evidence type="ECO:0000305" key="5"/>
<reference key="1">
    <citation type="submission" date="1998-02" db="EMBL/GenBank/DDBJ databases">
        <title>Mouse taipoxin-associated calcium binding protein 49 (TCBP49).</title>
        <authorList>
            <person name="Perin M.S."/>
        </authorList>
    </citation>
    <scope>NUCLEOTIDE SEQUENCE [MRNA]</scope>
</reference>
<reference key="2">
    <citation type="journal article" date="2005" name="Science">
        <title>The transcriptional landscape of the mammalian genome.</title>
        <authorList>
            <person name="Carninci P."/>
            <person name="Kasukawa T."/>
            <person name="Katayama S."/>
            <person name="Gough J."/>
            <person name="Frith M.C."/>
            <person name="Maeda N."/>
            <person name="Oyama R."/>
            <person name="Ravasi T."/>
            <person name="Lenhard B."/>
            <person name="Wells C."/>
            <person name="Kodzius R."/>
            <person name="Shimokawa K."/>
            <person name="Bajic V.B."/>
            <person name="Brenner S.E."/>
            <person name="Batalov S."/>
            <person name="Forrest A.R."/>
            <person name="Zavolan M."/>
            <person name="Davis M.J."/>
            <person name="Wilming L.G."/>
            <person name="Aidinis V."/>
            <person name="Allen J.E."/>
            <person name="Ambesi-Impiombato A."/>
            <person name="Apweiler R."/>
            <person name="Aturaliya R.N."/>
            <person name="Bailey T.L."/>
            <person name="Bansal M."/>
            <person name="Baxter L."/>
            <person name="Beisel K.W."/>
            <person name="Bersano T."/>
            <person name="Bono H."/>
            <person name="Chalk A.M."/>
            <person name="Chiu K.P."/>
            <person name="Choudhary V."/>
            <person name="Christoffels A."/>
            <person name="Clutterbuck D.R."/>
            <person name="Crowe M.L."/>
            <person name="Dalla E."/>
            <person name="Dalrymple B.P."/>
            <person name="de Bono B."/>
            <person name="Della Gatta G."/>
            <person name="di Bernardo D."/>
            <person name="Down T."/>
            <person name="Engstrom P."/>
            <person name="Fagiolini M."/>
            <person name="Faulkner G."/>
            <person name="Fletcher C.F."/>
            <person name="Fukushima T."/>
            <person name="Furuno M."/>
            <person name="Futaki S."/>
            <person name="Gariboldi M."/>
            <person name="Georgii-Hemming P."/>
            <person name="Gingeras T.R."/>
            <person name="Gojobori T."/>
            <person name="Green R.E."/>
            <person name="Gustincich S."/>
            <person name="Harbers M."/>
            <person name="Hayashi Y."/>
            <person name="Hensch T.K."/>
            <person name="Hirokawa N."/>
            <person name="Hill D."/>
            <person name="Huminiecki L."/>
            <person name="Iacono M."/>
            <person name="Ikeo K."/>
            <person name="Iwama A."/>
            <person name="Ishikawa T."/>
            <person name="Jakt M."/>
            <person name="Kanapin A."/>
            <person name="Katoh M."/>
            <person name="Kawasawa Y."/>
            <person name="Kelso J."/>
            <person name="Kitamura H."/>
            <person name="Kitano H."/>
            <person name="Kollias G."/>
            <person name="Krishnan S.P."/>
            <person name="Kruger A."/>
            <person name="Kummerfeld S.K."/>
            <person name="Kurochkin I.V."/>
            <person name="Lareau L.F."/>
            <person name="Lazarevic D."/>
            <person name="Lipovich L."/>
            <person name="Liu J."/>
            <person name="Liuni S."/>
            <person name="McWilliam S."/>
            <person name="Madan Babu M."/>
            <person name="Madera M."/>
            <person name="Marchionni L."/>
            <person name="Matsuda H."/>
            <person name="Matsuzawa S."/>
            <person name="Miki H."/>
            <person name="Mignone F."/>
            <person name="Miyake S."/>
            <person name="Morris K."/>
            <person name="Mottagui-Tabar S."/>
            <person name="Mulder N."/>
            <person name="Nakano N."/>
            <person name="Nakauchi H."/>
            <person name="Ng P."/>
            <person name="Nilsson R."/>
            <person name="Nishiguchi S."/>
            <person name="Nishikawa S."/>
            <person name="Nori F."/>
            <person name="Ohara O."/>
            <person name="Okazaki Y."/>
            <person name="Orlando V."/>
            <person name="Pang K.C."/>
            <person name="Pavan W.J."/>
            <person name="Pavesi G."/>
            <person name="Pesole G."/>
            <person name="Petrovsky N."/>
            <person name="Piazza S."/>
            <person name="Reed J."/>
            <person name="Reid J.F."/>
            <person name="Ring B.Z."/>
            <person name="Ringwald M."/>
            <person name="Rost B."/>
            <person name="Ruan Y."/>
            <person name="Salzberg S.L."/>
            <person name="Sandelin A."/>
            <person name="Schneider C."/>
            <person name="Schoenbach C."/>
            <person name="Sekiguchi K."/>
            <person name="Semple C.A."/>
            <person name="Seno S."/>
            <person name="Sessa L."/>
            <person name="Sheng Y."/>
            <person name="Shibata Y."/>
            <person name="Shimada H."/>
            <person name="Shimada K."/>
            <person name="Silva D."/>
            <person name="Sinclair B."/>
            <person name="Sperling S."/>
            <person name="Stupka E."/>
            <person name="Sugiura K."/>
            <person name="Sultana R."/>
            <person name="Takenaka Y."/>
            <person name="Taki K."/>
            <person name="Tammoja K."/>
            <person name="Tan S.L."/>
            <person name="Tang S."/>
            <person name="Taylor M.S."/>
            <person name="Tegner J."/>
            <person name="Teichmann S.A."/>
            <person name="Ueda H.R."/>
            <person name="van Nimwegen E."/>
            <person name="Verardo R."/>
            <person name="Wei C.L."/>
            <person name="Yagi K."/>
            <person name="Yamanishi H."/>
            <person name="Zabarovsky E."/>
            <person name="Zhu S."/>
            <person name="Zimmer A."/>
            <person name="Hide W."/>
            <person name="Bult C."/>
            <person name="Grimmond S.M."/>
            <person name="Teasdale R.D."/>
            <person name="Liu E.T."/>
            <person name="Brusic V."/>
            <person name="Quackenbush J."/>
            <person name="Wahlestedt C."/>
            <person name="Mattick J.S."/>
            <person name="Hume D.A."/>
            <person name="Kai C."/>
            <person name="Sasaki D."/>
            <person name="Tomaru Y."/>
            <person name="Fukuda S."/>
            <person name="Kanamori-Katayama M."/>
            <person name="Suzuki M."/>
            <person name="Aoki J."/>
            <person name="Arakawa T."/>
            <person name="Iida J."/>
            <person name="Imamura K."/>
            <person name="Itoh M."/>
            <person name="Kato T."/>
            <person name="Kawaji H."/>
            <person name="Kawagashira N."/>
            <person name="Kawashima T."/>
            <person name="Kojima M."/>
            <person name="Kondo S."/>
            <person name="Konno H."/>
            <person name="Nakano K."/>
            <person name="Ninomiya N."/>
            <person name="Nishio T."/>
            <person name="Okada M."/>
            <person name="Plessy C."/>
            <person name="Shibata K."/>
            <person name="Shiraki T."/>
            <person name="Suzuki S."/>
            <person name="Tagami M."/>
            <person name="Waki K."/>
            <person name="Watahiki A."/>
            <person name="Okamura-Oho Y."/>
            <person name="Suzuki H."/>
            <person name="Kawai J."/>
            <person name="Hayashizaki Y."/>
        </authorList>
    </citation>
    <scope>NUCLEOTIDE SEQUENCE [LARGE SCALE MRNA]</scope>
    <source>
        <strain>C57BL/6J</strain>
    </source>
</reference>
<reference key="3">
    <citation type="journal article" date="2004" name="Genome Res.">
        <title>The status, quality, and expansion of the NIH full-length cDNA project: the Mammalian Gene Collection (MGC).</title>
        <authorList>
            <consortium name="The MGC Project Team"/>
        </authorList>
    </citation>
    <scope>NUCLEOTIDE SEQUENCE [LARGE SCALE MRNA]</scope>
    <source>
        <tissue>Brain</tissue>
    </source>
</reference>
<reference key="4">
    <citation type="journal article" date="2010" name="Cell">
        <title>A tissue-specific atlas of mouse protein phosphorylation and expression.</title>
        <authorList>
            <person name="Huttlin E.L."/>
            <person name="Jedrychowski M.P."/>
            <person name="Elias J.E."/>
            <person name="Goswami T."/>
            <person name="Rad R."/>
            <person name="Beausoleil S.A."/>
            <person name="Villen J."/>
            <person name="Haas W."/>
            <person name="Sowa M.E."/>
            <person name="Gygi S.P."/>
        </authorList>
    </citation>
    <scope>IDENTIFICATION BY MASS SPECTROMETRY [LARGE SCALE ANALYSIS]</scope>
    <source>
        <tissue>Brain</tissue>
        <tissue>Lung</tissue>
        <tissue>Spleen</tissue>
        <tissue>Testis</tissue>
    </source>
</reference>
<feature type="signal peptide" evidence="1">
    <location>
        <begin position="1"/>
        <end position="25"/>
    </location>
</feature>
<feature type="chain" id="PRO_0000004149" description="Reticulocalbin-2">
    <location>
        <begin position="26"/>
        <end position="320"/>
    </location>
</feature>
<feature type="domain" description="EF-hand 1" evidence="3">
    <location>
        <begin position="64"/>
        <end position="99"/>
    </location>
</feature>
<feature type="domain" description="EF-hand 2" evidence="3">
    <location>
        <begin position="100"/>
        <end position="135"/>
    </location>
</feature>
<feature type="domain" description="EF-hand 3" evidence="5">
    <location>
        <begin position="150"/>
        <end position="185"/>
    </location>
</feature>
<feature type="domain" description="EF-hand 4" evidence="3">
    <location>
        <begin position="189"/>
        <end position="224"/>
    </location>
</feature>
<feature type="domain" description="EF-hand 5" evidence="3">
    <location>
        <begin position="230"/>
        <end position="265"/>
    </location>
</feature>
<feature type="domain" description="EF-hand 6" evidence="3">
    <location>
        <begin position="266"/>
        <end position="301"/>
    </location>
</feature>
<feature type="short sequence motif" description="Prevents secretion from ER" evidence="4">
    <location>
        <begin position="317"/>
        <end position="320"/>
    </location>
</feature>
<feature type="binding site" evidence="3">
    <location>
        <position position="77"/>
    </location>
    <ligand>
        <name>Ca(2+)</name>
        <dbReference type="ChEBI" id="CHEBI:29108"/>
        <label>1</label>
    </ligand>
</feature>
<feature type="binding site" evidence="3">
    <location>
        <position position="79"/>
    </location>
    <ligand>
        <name>Ca(2+)</name>
        <dbReference type="ChEBI" id="CHEBI:29108"/>
        <label>1</label>
    </ligand>
</feature>
<feature type="binding site" evidence="3">
    <location>
        <position position="81"/>
    </location>
    <ligand>
        <name>Ca(2+)</name>
        <dbReference type="ChEBI" id="CHEBI:29108"/>
        <label>1</label>
    </ligand>
</feature>
<feature type="binding site" evidence="3">
    <location>
        <position position="88"/>
    </location>
    <ligand>
        <name>Ca(2+)</name>
        <dbReference type="ChEBI" id="CHEBI:29108"/>
        <label>1</label>
    </ligand>
</feature>
<feature type="binding site" evidence="3">
    <location>
        <position position="113"/>
    </location>
    <ligand>
        <name>Ca(2+)</name>
        <dbReference type="ChEBI" id="CHEBI:29108"/>
        <label>2</label>
    </ligand>
</feature>
<feature type="binding site" evidence="3">
    <location>
        <position position="115"/>
    </location>
    <ligand>
        <name>Ca(2+)</name>
        <dbReference type="ChEBI" id="CHEBI:29108"/>
        <label>2</label>
    </ligand>
</feature>
<feature type="binding site" evidence="3">
    <location>
        <position position="117"/>
    </location>
    <ligand>
        <name>Ca(2+)</name>
        <dbReference type="ChEBI" id="CHEBI:29108"/>
        <label>2</label>
    </ligand>
</feature>
<feature type="binding site" evidence="3">
    <location>
        <position position="124"/>
    </location>
    <ligand>
        <name>Ca(2+)</name>
        <dbReference type="ChEBI" id="CHEBI:29108"/>
        <label>2</label>
    </ligand>
</feature>
<feature type="binding site" evidence="5">
    <location>
        <position position="167"/>
    </location>
    <ligand>
        <name>Ca(2+)</name>
        <dbReference type="ChEBI" id="CHEBI:29108"/>
        <label>3</label>
    </ligand>
</feature>
<feature type="binding site" evidence="5">
    <location>
        <position position="176"/>
    </location>
    <ligand>
        <name>Ca(2+)</name>
        <dbReference type="ChEBI" id="CHEBI:29108"/>
        <label>3</label>
    </ligand>
</feature>
<feature type="binding site" evidence="3">
    <location>
        <position position="202"/>
    </location>
    <ligand>
        <name>Ca(2+)</name>
        <dbReference type="ChEBI" id="CHEBI:29108"/>
        <label>4</label>
    </ligand>
</feature>
<feature type="binding site" evidence="3">
    <location>
        <position position="204"/>
    </location>
    <ligand>
        <name>Ca(2+)</name>
        <dbReference type="ChEBI" id="CHEBI:29108"/>
        <label>4</label>
    </ligand>
</feature>
<feature type="binding site" evidence="3">
    <location>
        <position position="206"/>
    </location>
    <ligand>
        <name>Ca(2+)</name>
        <dbReference type="ChEBI" id="CHEBI:29108"/>
        <label>4</label>
    </ligand>
</feature>
<feature type="binding site" evidence="3">
    <location>
        <position position="213"/>
    </location>
    <ligand>
        <name>Ca(2+)</name>
        <dbReference type="ChEBI" id="CHEBI:29108"/>
        <label>4</label>
    </ligand>
</feature>
<feature type="binding site" evidence="3">
    <location>
        <position position="243"/>
    </location>
    <ligand>
        <name>Ca(2+)</name>
        <dbReference type="ChEBI" id="CHEBI:29108"/>
        <label>5</label>
    </ligand>
</feature>
<feature type="binding site" evidence="3">
    <location>
        <position position="245"/>
    </location>
    <ligand>
        <name>Ca(2+)</name>
        <dbReference type="ChEBI" id="CHEBI:29108"/>
        <label>5</label>
    </ligand>
</feature>
<feature type="binding site" evidence="3">
    <location>
        <position position="247"/>
    </location>
    <ligand>
        <name>Ca(2+)</name>
        <dbReference type="ChEBI" id="CHEBI:29108"/>
        <label>5</label>
    </ligand>
</feature>
<feature type="binding site" evidence="3">
    <location>
        <position position="249"/>
    </location>
    <ligand>
        <name>Ca(2+)</name>
        <dbReference type="ChEBI" id="CHEBI:29108"/>
        <label>5</label>
    </ligand>
</feature>
<feature type="binding site" evidence="3">
    <location>
        <position position="254"/>
    </location>
    <ligand>
        <name>Ca(2+)</name>
        <dbReference type="ChEBI" id="CHEBI:29108"/>
        <label>5</label>
    </ligand>
</feature>
<feature type="binding site" evidence="3">
    <location>
        <position position="279"/>
    </location>
    <ligand>
        <name>Ca(2+)</name>
        <dbReference type="ChEBI" id="CHEBI:29108"/>
        <label>6</label>
    </ligand>
</feature>
<feature type="binding site" evidence="3">
    <location>
        <position position="281"/>
    </location>
    <ligand>
        <name>Ca(2+)</name>
        <dbReference type="ChEBI" id="CHEBI:29108"/>
        <label>6</label>
    </ligand>
</feature>
<feature type="binding site" evidence="3">
    <location>
        <position position="283"/>
    </location>
    <ligand>
        <name>Ca(2+)</name>
        <dbReference type="ChEBI" id="CHEBI:29108"/>
        <label>6</label>
    </ligand>
</feature>
<feature type="binding site" evidence="3">
    <location>
        <position position="285"/>
    </location>
    <ligand>
        <name>Ca(2+)</name>
        <dbReference type="ChEBI" id="CHEBI:29108"/>
        <label>6</label>
    </ligand>
</feature>
<feature type="binding site" evidence="3">
    <location>
        <position position="290"/>
    </location>
    <ligand>
        <name>Ca(2+)</name>
        <dbReference type="ChEBI" id="CHEBI:29108"/>
        <label>6</label>
    </ligand>
</feature>
<feature type="modified residue" description="Phosphothreonine" evidence="2">
    <location>
        <position position="140"/>
    </location>
</feature>
<feature type="sequence conflict" description="In Ref. 1; AAC05132." evidence="5" ref="1">
    <original>A</original>
    <variation>DP</variation>
    <location>
        <position position="119"/>
    </location>
</feature>
<feature type="sequence conflict" description="In Ref. 1; AAC05132." evidence="5" ref="1">
    <original>EA</original>
    <variation>DQ</variation>
    <location>
        <begin position="302"/>
        <end position="303"/>
    </location>
</feature>
<accession>Q8BP92</accession>
<accession>A2RT07</accession>
<accession>O70341</accession>
<dbReference type="EMBL" id="AF049125">
    <property type="protein sequence ID" value="AAC05132.1"/>
    <property type="molecule type" value="mRNA"/>
</dbReference>
<dbReference type="EMBL" id="AK077486">
    <property type="protein sequence ID" value="BAC36825.1"/>
    <property type="molecule type" value="mRNA"/>
</dbReference>
<dbReference type="EMBL" id="BC132320">
    <property type="protein sequence ID" value="AAI32321.1"/>
    <property type="molecule type" value="mRNA"/>
</dbReference>
<dbReference type="EMBL" id="BC145668">
    <property type="protein sequence ID" value="AAI45669.1"/>
    <property type="molecule type" value="mRNA"/>
</dbReference>
<dbReference type="CCDS" id="CCDS23206.1"/>
<dbReference type="PIR" id="JC5402">
    <property type="entry name" value="JC5402"/>
</dbReference>
<dbReference type="RefSeq" id="NP_036122.2">
    <property type="nucleotide sequence ID" value="NM_011992.2"/>
</dbReference>
<dbReference type="BioGRID" id="205029">
    <property type="interactions" value="13"/>
</dbReference>
<dbReference type="DIP" id="DIP-46963N"/>
<dbReference type="FunCoup" id="Q8BP92">
    <property type="interactions" value="4315"/>
</dbReference>
<dbReference type="IntAct" id="Q8BP92">
    <property type="interactions" value="10"/>
</dbReference>
<dbReference type="MINT" id="Q8BP92"/>
<dbReference type="STRING" id="10090.ENSMUSP00000109915"/>
<dbReference type="iPTMnet" id="Q8BP92"/>
<dbReference type="PhosphoSitePlus" id="Q8BP92"/>
<dbReference type="jPOST" id="Q8BP92"/>
<dbReference type="PaxDb" id="10090-ENSMUSP00000109915"/>
<dbReference type="PeptideAtlas" id="Q8BP92"/>
<dbReference type="ProteomicsDB" id="300326"/>
<dbReference type="Pumba" id="Q8BP92"/>
<dbReference type="Antibodypedia" id="27461">
    <property type="antibodies" value="125 antibodies from 23 providers"/>
</dbReference>
<dbReference type="DNASU" id="26611"/>
<dbReference type="Ensembl" id="ENSMUST00000114276.3">
    <property type="protein sequence ID" value="ENSMUSP00000109915.3"/>
    <property type="gene ID" value="ENSMUSG00000032320.8"/>
</dbReference>
<dbReference type="GeneID" id="26611"/>
<dbReference type="KEGG" id="mmu:26611"/>
<dbReference type="UCSC" id="uc009pss.1">
    <property type="organism name" value="mouse"/>
</dbReference>
<dbReference type="AGR" id="MGI:1349765"/>
<dbReference type="CTD" id="5955"/>
<dbReference type="MGI" id="MGI:1349765">
    <property type="gene designation" value="Rcn2"/>
</dbReference>
<dbReference type="VEuPathDB" id="HostDB:ENSMUSG00000032320"/>
<dbReference type="eggNOG" id="KOG4223">
    <property type="taxonomic scope" value="Eukaryota"/>
</dbReference>
<dbReference type="GeneTree" id="ENSGT01010000222360"/>
<dbReference type="HOGENOM" id="CLU_044718_0_0_1"/>
<dbReference type="InParanoid" id="Q8BP92"/>
<dbReference type="OMA" id="HELTQWN"/>
<dbReference type="OrthoDB" id="293868at2759"/>
<dbReference type="PhylomeDB" id="Q8BP92"/>
<dbReference type="TreeFam" id="TF314849"/>
<dbReference type="BioGRID-ORCS" id="26611">
    <property type="hits" value="4 hits in 76 CRISPR screens"/>
</dbReference>
<dbReference type="ChiTaRS" id="Rcn2">
    <property type="organism name" value="mouse"/>
</dbReference>
<dbReference type="PRO" id="PR:Q8BP92"/>
<dbReference type="Proteomes" id="UP000000589">
    <property type="component" value="Chromosome 9"/>
</dbReference>
<dbReference type="RNAct" id="Q8BP92">
    <property type="molecule type" value="protein"/>
</dbReference>
<dbReference type="Bgee" id="ENSMUSG00000032320">
    <property type="expression patterns" value="Expressed in saccule of membranous labyrinth and 271 other cell types or tissues"/>
</dbReference>
<dbReference type="ExpressionAtlas" id="Q8BP92">
    <property type="expression patterns" value="baseline and differential"/>
</dbReference>
<dbReference type="GO" id="GO:0005788">
    <property type="term" value="C:endoplasmic reticulum lumen"/>
    <property type="evidence" value="ECO:0007669"/>
    <property type="project" value="UniProtKB-SubCell"/>
</dbReference>
<dbReference type="GO" id="GO:0005730">
    <property type="term" value="C:nucleolus"/>
    <property type="evidence" value="ECO:0007669"/>
    <property type="project" value="Ensembl"/>
</dbReference>
<dbReference type="GO" id="GO:0005509">
    <property type="term" value="F:calcium ion binding"/>
    <property type="evidence" value="ECO:0007669"/>
    <property type="project" value="InterPro"/>
</dbReference>
<dbReference type="CDD" id="cd16224">
    <property type="entry name" value="EFh_CREC_RCN2"/>
    <property type="match status" value="1"/>
</dbReference>
<dbReference type="FunFam" id="1.10.238.10:FF:000125">
    <property type="entry name" value="Reticulocalbin 2"/>
    <property type="match status" value="1"/>
</dbReference>
<dbReference type="FunFam" id="1.10.238.10:FF:000170">
    <property type="entry name" value="reticulocalbin-2 isoform X1"/>
    <property type="match status" value="1"/>
</dbReference>
<dbReference type="FunFam" id="1.10.238.10:FF:000176">
    <property type="entry name" value="reticulocalbin-2 isoform X2"/>
    <property type="match status" value="1"/>
</dbReference>
<dbReference type="Gene3D" id="1.10.238.10">
    <property type="entry name" value="EF-hand"/>
    <property type="match status" value="3"/>
</dbReference>
<dbReference type="InterPro" id="IPR011992">
    <property type="entry name" value="EF-hand-dom_pair"/>
</dbReference>
<dbReference type="InterPro" id="IPR018247">
    <property type="entry name" value="EF_Hand_1_Ca_BS"/>
</dbReference>
<dbReference type="InterPro" id="IPR002048">
    <property type="entry name" value="EF_hand_dom"/>
</dbReference>
<dbReference type="PANTHER" id="PTHR10827">
    <property type="entry name" value="RETICULOCALBIN"/>
    <property type="match status" value="1"/>
</dbReference>
<dbReference type="PANTHER" id="PTHR10827:SF78">
    <property type="entry name" value="RETICULOCALBIN-2"/>
    <property type="match status" value="1"/>
</dbReference>
<dbReference type="Pfam" id="PF13202">
    <property type="entry name" value="EF-hand_5"/>
    <property type="match status" value="1"/>
</dbReference>
<dbReference type="Pfam" id="PF13499">
    <property type="entry name" value="EF-hand_7"/>
    <property type="match status" value="2"/>
</dbReference>
<dbReference type="SMART" id="SM00054">
    <property type="entry name" value="EFh"/>
    <property type="match status" value="5"/>
</dbReference>
<dbReference type="SUPFAM" id="SSF47473">
    <property type="entry name" value="EF-hand"/>
    <property type="match status" value="2"/>
</dbReference>
<dbReference type="PROSITE" id="PS00018">
    <property type="entry name" value="EF_HAND_1"/>
    <property type="match status" value="5"/>
</dbReference>
<dbReference type="PROSITE" id="PS50222">
    <property type="entry name" value="EF_HAND_2"/>
    <property type="match status" value="5"/>
</dbReference>
<dbReference type="PROSITE" id="PS00014">
    <property type="entry name" value="ER_TARGET"/>
    <property type="match status" value="1"/>
</dbReference>
<name>RCN2_MOUSE</name>
<protein>
    <recommendedName>
        <fullName>Reticulocalbin-2</fullName>
    </recommendedName>
    <alternativeName>
        <fullName>Taipoxin-associated calcium-binding protein 49</fullName>
        <shortName>TCBP-49</shortName>
    </alternativeName>
</protein>
<keyword id="KW-0106">Calcium</keyword>
<keyword id="KW-0256">Endoplasmic reticulum</keyword>
<keyword id="KW-0479">Metal-binding</keyword>
<keyword id="KW-0597">Phosphoprotein</keyword>
<keyword id="KW-1185">Reference proteome</keyword>
<keyword id="KW-0677">Repeat</keyword>
<keyword id="KW-0732">Signal</keyword>
<organism>
    <name type="scientific">Mus musculus</name>
    <name type="common">Mouse</name>
    <dbReference type="NCBI Taxonomy" id="10090"/>
    <lineage>
        <taxon>Eukaryota</taxon>
        <taxon>Metazoa</taxon>
        <taxon>Chordata</taxon>
        <taxon>Craniata</taxon>
        <taxon>Vertebrata</taxon>
        <taxon>Euteleostomi</taxon>
        <taxon>Mammalia</taxon>
        <taxon>Eutheria</taxon>
        <taxon>Euarchontoglires</taxon>
        <taxon>Glires</taxon>
        <taxon>Rodentia</taxon>
        <taxon>Myomorpha</taxon>
        <taxon>Muroidea</taxon>
        <taxon>Muridae</taxon>
        <taxon>Murinae</taxon>
        <taxon>Mus</taxon>
        <taxon>Mus</taxon>
    </lineage>
</organism>
<sequence>MRLGPRPAALGLLLPLLLYAAVAGASKAEELHYPQGEHRADYDREALLGVQEDVDEYVKLGHEEQQRRLQSIIKKIDSDSDGFLTENELSQWIQMSFKHYAMQEAKQQFVEYDKNSDGAVTWDEYNIQMYDRVIDFDENTALDDTEEGSFRQLHLKDKKRFEKANQDSGPGLSLEEFIAFEHPEEVDYMTEFVIQEALEEHDKNGDGFVSLEEFLGDYRRDPTANEDPEWILVEKDRFVNDYDKDNDGRLDPQELLSWVVPNNQGIAQEEALHLIDEMDLNSDKKLSEEEILENQDLFLTSEATDYGRQLHDDYFYHDEL</sequence>